<keyword id="KW-0929">Antimicrobial</keyword>
<keyword id="KW-0081">Bacteriolytic enzyme</keyword>
<keyword id="KW-1015">Disulfide bond</keyword>
<keyword id="KW-0326">Glycosidase</keyword>
<keyword id="KW-0378">Hydrolase</keyword>
<keyword id="KW-1185">Reference proteome</keyword>
<keyword id="KW-0732">Signal</keyword>
<sequence>MKAFIVLVALAMAAPALGRTLDRCSLAREMSNLGVPRDQLARWACIAEHESSYRTGVVGPENYNGSNDYGIFQINNYYWCAPPSGRFSYNECGLSCNALLTDDITHSVRCAQKVLSQQGWSAWSTWHYCSGWLPSIDGCF</sequence>
<organism>
    <name type="scientific">Drosophila melanogaster</name>
    <name type="common">Fruit fly</name>
    <dbReference type="NCBI Taxonomy" id="7227"/>
    <lineage>
        <taxon>Eukaryota</taxon>
        <taxon>Metazoa</taxon>
        <taxon>Ecdysozoa</taxon>
        <taxon>Arthropoda</taxon>
        <taxon>Hexapoda</taxon>
        <taxon>Insecta</taxon>
        <taxon>Pterygota</taxon>
        <taxon>Neoptera</taxon>
        <taxon>Endopterygota</taxon>
        <taxon>Diptera</taxon>
        <taxon>Brachycera</taxon>
        <taxon>Muscomorpha</taxon>
        <taxon>Ephydroidea</taxon>
        <taxon>Drosophilidae</taxon>
        <taxon>Drosophila</taxon>
        <taxon>Sophophora</taxon>
    </lineage>
</organism>
<proteinExistence type="evidence at transcript level"/>
<gene>
    <name type="primary">LysE</name>
    <name type="ORF">CG1180</name>
</gene>
<protein>
    <recommendedName>
        <fullName>Lysozyme E</fullName>
        <ecNumber>3.2.1.17</ecNumber>
    </recommendedName>
    <alternativeName>
        <fullName>1,4-beta-N-acetylmuramidase E</fullName>
    </alternativeName>
</protein>
<name>LYSE_DROME</name>
<reference key="1">
    <citation type="journal article" date="1994" name="Mol. Gen. Genet.">
        <title>The lysozyme locus in Drosophila melanogaster: an expanded gene family adapted for expression in the digestive tract.</title>
        <authorList>
            <person name="Daffre S."/>
            <person name="Kylsten P."/>
            <person name="Samakovlis C."/>
            <person name="Hultmark D."/>
        </authorList>
    </citation>
    <scope>NUCLEOTIDE SEQUENCE [GENOMIC DNA]</scope>
    <source>
        <strain>Canton-S</strain>
    </source>
</reference>
<reference key="2">
    <citation type="journal article" date="2000" name="Science">
        <title>The genome sequence of Drosophila melanogaster.</title>
        <authorList>
            <person name="Adams M.D."/>
            <person name="Celniker S.E."/>
            <person name="Holt R.A."/>
            <person name="Evans C.A."/>
            <person name="Gocayne J.D."/>
            <person name="Amanatides P.G."/>
            <person name="Scherer S.E."/>
            <person name="Li P.W."/>
            <person name="Hoskins R.A."/>
            <person name="Galle R.F."/>
            <person name="George R.A."/>
            <person name="Lewis S.E."/>
            <person name="Richards S."/>
            <person name="Ashburner M."/>
            <person name="Henderson S.N."/>
            <person name="Sutton G.G."/>
            <person name="Wortman J.R."/>
            <person name="Yandell M.D."/>
            <person name="Zhang Q."/>
            <person name="Chen L.X."/>
            <person name="Brandon R.C."/>
            <person name="Rogers Y.-H.C."/>
            <person name="Blazej R.G."/>
            <person name="Champe M."/>
            <person name="Pfeiffer B.D."/>
            <person name="Wan K.H."/>
            <person name="Doyle C."/>
            <person name="Baxter E.G."/>
            <person name="Helt G."/>
            <person name="Nelson C.R."/>
            <person name="Miklos G.L.G."/>
            <person name="Abril J.F."/>
            <person name="Agbayani A."/>
            <person name="An H.-J."/>
            <person name="Andrews-Pfannkoch C."/>
            <person name="Baldwin D."/>
            <person name="Ballew R.M."/>
            <person name="Basu A."/>
            <person name="Baxendale J."/>
            <person name="Bayraktaroglu L."/>
            <person name="Beasley E.M."/>
            <person name="Beeson K.Y."/>
            <person name="Benos P.V."/>
            <person name="Berman B.P."/>
            <person name="Bhandari D."/>
            <person name="Bolshakov S."/>
            <person name="Borkova D."/>
            <person name="Botchan M.R."/>
            <person name="Bouck J."/>
            <person name="Brokstein P."/>
            <person name="Brottier P."/>
            <person name="Burtis K.C."/>
            <person name="Busam D.A."/>
            <person name="Butler H."/>
            <person name="Cadieu E."/>
            <person name="Center A."/>
            <person name="Chandra I."/>
            <person name="Cherry J.M."/>
            <person name="Cawley S."/>
            <person name="Dahlke C."/>
            <person name="Davenport L.B."/>
            <person name="Davies P."/>
            <person name="de Pablos B."/>
            <person name="Delcher A."/>
            <person name="Deng Z."/>
            <person name="Mays A.D."/>
            <person name="Dew I."/>
            <person name="Dietz S.M."/>
            <person name="Dodson K."/>
            <person name="Doup L.E."/>
            <person name="Downes M."/>
            <person name="Dugan-Rocha S."/>
            <person name="Dunkov B.C."/>
            <person name="Dunn P."/>
            <person name="Durbin K.J."/>
            <person name="Evangelista C.C."/>
            <person name="Ferraz C."/>
            <person name="Ferriera S."/>
            <person name="Fleischmann W."/>
            <person name="Fosler C."/>
            <person name="Gabrielian A.E."/>
            <person name="Garg N.S."/>
            <person name="Gelbart W.M."/>
            <person name="Glasser K."/>
            <person name="Glodek A."/>
            <person name="Gong F."/>
            <person name="Gorrell J.H."/>
            <person name="Gu Z."/>
            <person name="Guan P."/>
            <person name="Harris M."/>
            <person name="Harris N.L."/>
            <person name="Harvey D.A."/>
            <person name="Heiman T.J."/>
            <person name="Hernandez J.R."/>
            <person name="Houck J."/>
            <person name="Hostin D."/>
            <person name="Houston K.A."/>
            <person name="Howland T.J."/>
            <person name="Wei M.-H."/>
            <person name="Ibegwam C."/>
            <person name="Jalali M."/>
            <person name="Kalush F."/>
            <person name="Karpen G.H."/>
            <person name="Ke Z."/>
            <person name="Kennison J.A."/>
            <person name="Ketchum K.A."/>
            <person name="Kimmel B.E."/>
            <person name="Kodira C.D."/>
            <person name="Kraft C.L."/>
            <person name="Kravitz S."/>
            <person name="Kulp D."/>
            <person name="Lai Z."/>
            <person name="Lasko P."/>
            <person name="Lei Y."/>
            <person name="Levitsky A.A."/>
            <person name="Li J.H."/>
            <person name="Li Z."/>
            <person name="Liang Y."/>
            <person name="Lin X."/>
            <person name="Liu X."/>
            <person name="Mattei B."/>
            <person name="McIntosh T.C."/>
            <person name="McLeod M.P."/>
            <person name="McPherson D."/>
            <person name="Merkulov G."/>
            <person name="Milshina N.V."/>
            <person name="Mobarry C."/>
            <person name="Morris J."/>
            <person name="Moshrefi A."/>
            <person name="Mount S.M."/>
            <person name="Moy M."/>
            <person name="Murphy B."/>
            <person name="Murphy L."/>
            <person name="Muzny D.M."/>
            <person name="Nelson D.L."/>
            <person name="Nelson D.R."/>
            <person name="Nelson K.A."/>
            <person name="Nixon K."/>
            <person name="Nusskern D.R."/>
            <person name="Pacleb J.M."/>
            <person name="Palazzolo M."/>
            <person name="Pittman G.S."/>
            <person name="Pan S."/>
            <person name="Pollard J."/>
            <person name="Puri V."/>
            <person name="Reese M.G."/>
            <person name="Reinert K."/>
            <person name="Remington K."/>
            <person name="Saunders R.D.C."/>
            <person name="Scheeler F."/>
            <person name="Shen H."/>
            <person name="Shue B.C."/>
            <person name="Siden-Kiamos I."/>
            <person name="Simpson M."/>
            <person name="Skupski M.P."/>
            <person name="Smith T.J."/>
            <person name="Spier E."/>
            <person name="Spradling A.C."/>
            <person name="Stapleton M."/>
            <person name="Strong R."/>
            <person name="Sun E."/>
            <person name="Svirskas R."/>
            <person name="Tector C."/>
            <person name="Turner R."/>
            <person name="Venter E."/>
            <person name="Wang A.H."/>
            <person name="Wang X."/>
            <person name="Wang Z.-Y."/>
            <person name="Wassarman D.A."/>
            <person name="Weinstock G.M."/>
            <person name="Weissenbach J."/>
            <person name="Williams S.M."/>
            <person name="Woodage T."/>
            <person name="Worley K.C."/>
            <person name="Wu D."/>
            <person name="Yang S."/>
            <person name="Yao Q.A."/>
            <person name="Ye J."/>
            <person name="Yeh R.-F."/>
            <person name="Zaveri J.S."/>
            <person name="Zhan M."/>
            <person name="Zhang G."/>
            <person name="Zhao Q."/>
            <person name="Zheng L."/>
            <person name="Zheng X.H."/>
            <person name="Zhong F.N."/>
            <person name="Zhong W."/>
            <person name="Zhou X."/>
            <person name="Zhu S.C."/>
            <person name="Zhu X."/>
            <person name="Smith H.O."/>
            <person name="Gibbs R.A."/>
            <person name="Myers E.W."/>
            <person name="Rubin G.M."/>
            <person name="Venter J.C."/>
        </authorList>
    </citation>
    <scope>NUCLEOTIDE SEQUENCE [LARGE SCALE GENOMIC DNA]</scope>
    <source>
        <strain>Berkeley</strain>
    </source>
</reference>
<reference key="3">
    <citation type="journal article" date="2002" name="Genome Biol.">
        <title>Annotation of the Drosophila melanogaster euchromatic genome: a systematic review.</title>
        <authorList>
            <person name="Misra S."/>
            <person name="Crosby M.A."/>
            <person name="Mungall C.J."/>
            <person name="Matthews B.B."/>
            <person name="Campbell K.S."/>
            <person name="Hradecky P."/>
            <person name="Huang Y."/>
            <person name="Kaminker J.S."/>
            <person name="Millburn G.H."/>
            <person name="Prochnik S.E."/>
            <person name="Smith C.D."/>
            <person name="Tupy J.L."/>
            <person name="Whitfield E.J."/>
            <person name="Bayraktaroglu L."/>
            <person name="Berman B.P."/>
            <person name="Bettencourt B.R."/>
            <person name="Celniker S.E."/>
            <person name="de Grey A.D.N.J."/>
            <person name="Drysdale R.A."/>
            <person name="Harris N.L."/>
            <person name="Richter J."/>
            <person name="Russo S."/>
            <person name="Schroeder A.J."/>
            <person name="Shu S.Q."/>
            <person name="Stapleton M."/>
            <person name="Yamada C."/>
            <person name="Ashburner M."/>
            <person name="Gelbart W.M."/>
            <person name="Rubin G.M."/>
            <person name="Lewis S.E."/>
        </authorList>
    </citation>
    <scope>GENOME REANNOTATION</scope>
    <source>
        <strain>Berkeley</strain>
    </source>
</reference>
<reference key="4">
    <citation type="submission" date="2009-10" db="EMBL/GenBank/DDBJ databases">
        <authorList>
            <person name="Stapleton M."/>
            <person name="Brokstein P."/>
            <person name="Hong L."/>
            <person name="Agbayani A."/>
            <person name="Carlson J.W."/>
            <person name="Booth B."/>
            <person name="Champe M."/>
            <person name="Chavez C."/>
            <person name="Dorsett V."/>
            <person name="Dresnek D."/>
            <person name="Farfan D."/>
            <person name="Frise E."/>
            <person name="George R.A."/>
            <person name="Gonzalez M."/>
            <person name="Guarin H."/>
            <person name="Kronmiller B."/>
            <person name="Li P.W."/>
            <person name="Liao G."/>
            <person name="Miranda A."/>
            <person name="Mungall C.J."/>
            <person name="Nunoo J."/>
            <person name="Pacleb J."/>
            <person name="Paragas V."/>
            <person name="Park S."/>
            <person name="Patel S."/>
            <person name="Phouanenavong S."/>
            <person name="Sandler J."/>
            <person name="Wan K.H."/>
            <person name="Yu C."/>
            <person name="Lewis S.E."/>
            <person name="Rubin G.M."/>
            <person name="Celniker S.E."/>
        </authorList>
    </citation>
    <scope>NUCLEOTIDE SEQUENCE [LARGE SCALE MRNA]</scope>
    <source>
        <strain>Berkeley</strain>
        <tissue>Larva</tissue>
        <tissue>Pupae</tissue>
    </source>
</reference>
<comment type="function">
    <text>Unlikely to play an active role in the humoral immune defense. May have a function in the digestion of bacteria in the food.</text>
</comment>
<comment type="catalytic activity">
    <reaction>
        <text>Hydrolysis of (1-&gt;4)-beta-linkages between N-acetylmuramic acid and N-acetyl-D-glucosamine residues in a peptidoglycan and between N-acetyl-D-glucosamine residues in chitodextrins.</text>
        <dbReference type="EC" id="3.2.1.17"/>
    </reaction>
</comment>
<comment type="tissue specificity">
    <text>Found in the midgut.</text>
</comment>
<comment type="developmental stage">
    <text>Maximal expression is found during the third larval instar, it drops to become undetectable in the late pupal stage. The expression in adults is similar to that of first and second larval instars.</text>
</comment>
<comment type="similarity">
    <text evidence="2">Belongs to the glycosyl hydrolase 22 family.</text>
</comment>
<accession>P37159</accession>
<accession>C9QP86</accession>
<accession>Q8MS67</accession>
<accession>Q9W0J5</accession>
<evidence type="ECO:0000250" key="1"/>
<evidence type="ECO:0000255" key="2">
    <source>
        <dbReference type="PROSITE-ProRule" id="PRU00680"/>
    </source>
</evidence>
<evidence type="ECO:0000305" key="3"/>
<feature type="signal peptide" evidence="1">
    <location>
        <begin position="1"/>
        <end position="18"/>
    </location>
</feature>
<feature type="chain" id="PRO_0000018513" description="Lysozyme E">
    <location>
        <begin position="19"/>
        <end position="140"/>
    </location>
</feature>
<feature type="domain" description="C-type lysozyme" evidence="2">
    <location>
        <begin position="19"/>
        <end position="140"/>
    </location>
</feature>
<feature type="active site" evidence="2">
    <location>
        <position position="50"/>
    </location>
</feature>
<feature type="active site" evidence="2">
    <location>
        <position position="68"/>
    </location>
</feature>
<feature type="disulfide bond" evidence="2">
    <location>
        <begin position="24"/>
        <end position="139"/>
    </location>
</feature>
<feature type="disulfide bond" evidence="2">
    <location>
        <begin position="45"/>
        <end position="129"/>
    </location>
</feature>
<feature type="disulfide bond" evidence="2">
    <location>
        <begin position="80"/>
        <end position="96"/>
    </location>
</feature>
<feature type="disulfide bond" evidence="2">
    <location>
        <begin position="92"/>
        <end position="110"/>
    </location>
</feature>
<feature type="sequence conflict" description="In Ref. 1; CAA80229." evidence="3" ref="1">
    <original>M</original>
    <variation>L</variation>
    <location>
        <position position="12"/>
    </location>
</feature>
<feature type="sequence conflict" description="In Ref. 1; CAA80229." evidence="3" ref="1">
    <original>N</original>
    <variation>D</variation>
    <location>
        <position position="76"/>
    </location>
</feature>
<feature type="sequence conflict" description="In Ref. 1; CAA80229." evidence="3" ref="1">
    <original>G</original>
    <variation>D</variation>
    <location>
        <position position="138"/>
    </location>
</feature>
<dbReference type="EC" id="3.2.1.17"/>
<dbReference type="EMBL" id="Z22227">
    <property type="protein sequence ID" value="CAA80229.1"/>
    <property type="molecule type" value="Genomic_DNA"/>
</dbReference>
<dbReference type="EMBL" id="AE014296">
    <property type="protein sequence ID" value="AAF47451.1"/>
    <property type="molecule type" value="Genomic_DNA"/>
</dbReference>
<dbReference type="EMBL" id="AY119059">
    <property type="protein sequence ID" value="AAM50919.1"/>
    <property type="molecule type" value="mRNA"/>
</dbReference>
<dbReference type="EMBL" id="BT099968">
    <property type="protein sequence ID" value="ACX53649.1"/>
    <property type="molecule type" value="mRNA"/>
</dbReference>
<dbReference type="PIR" id="S41577">
    <property type="entry name" value="S41577"/>
</dbReference>
<dbReference type="RefSeq" id="NP_476827.2">
    <property type="nucleotide sequence ID" value="NM_057479.3"/>
</dbReference>
<dbReference type="SMR" id="P37159"/>
<dbReference type="BioGRID" id="63674">
    <property type="interactions" value="1"/>
</dbReference>
<dbReference type="DIP" id="DIP-20170N"/>
<dbReference type="FunCoup" id="P37159">
    <property type="interactions" value="57"/>
</dbReference>
<dbReference type="STRING" id="7227.FBpp0072526"/>
<dbReference type="CAZy" id="GH22">
    <property type="family name" value="Glycoside Hydrolase Family 22"/>
</dbReference>
<dbReference type="PaxDb" id="7227-FBpp0072526"/>
<dbReference type="DNASU" id="38128"/>
<dbReference type="EnsemblMetazoa" id="FBtr0072630">
    <property type="protein sequence ID" value="FBpp0072526"/>
    <property type="gene ID" value="FBgn0004428"/>
</dbReference>
<dbReference type="GeneID" id="38128"/>
<dbReference type="KEGG" id="dme:Dmel_CG1180"/>
<dbReference type="AGR" id="FB:FBgn0004428"/>
<dbReference type="CTD" id="38128"/>
<dbReference type="FlyBase" id="FBgn0004428">
    <property type="gene designation" value="LysE"/>
</dbReference>
<dbReference type="VEuPathDB" id="VectorBase:FBgn0004428"/>
<dbReference type="eggNOG" id="ENOG502S1S1">
    <property type="taxonomic scope" value="Eukaryota"/>
</dbReference>
<dbReference type="GeneTree" id="ENSGT00940000166760"/>
<dbReference type="HOGENOM" id="CLU_111620_2_1_1"/>
<dbReference type="InParanoid" id="P37159"/>
<dbReference type="OMA" id="YNTLAKY"/>
<dbReference type="OrthoDB" id="17373at2759"/>
<dbReference type="PhylomeDB" id="P37159"/>
<dbReference type="Reactome" id="R-DME-5653890">
    <property type="pathway name" value="Lactose synthesis"/>
</dbReference>
<dbReference type="BioGRID-ORCS" id="38128">
    <property type="hits" value="0 hits in 3 CRISPR screens"/>
</dbReference>
<dbReference type="GenomeRNAi" id="38128"/>
<dbReference type="PRO" id="PR:P37159"/>
<dbReference type="Proteomes" id="UP000000803">
    <property type="component" value="Chromosome 3L"/>
</dbReference>
<dbReference type="Bgee" id="FBgn0004428">
    <property type="expression patterns" value="Expressed in spermatid in male reproductive gland and 17 other cell types or tissues"/>
</dbReference>
<dbReference type="GO" id="GO:0005615">
    <property type="term" value="C:extracellular space"/>
    <property type="evidence" value="ECO:0000250"/>
    <property type="project" value="FlyBase"/>
</dbReference>
<dbReference type="GO" id="GO:0003796">
    <property type="term" value="F:lysozyme activity"/>
    <property type="evidence" value="ECO:0000250"/>
    <property type="project" value="FlyBase"/>
</dbReference>
<dbReference type="GO" id="GO:0050829">
    <property type="term" value="P:defense response to Gram-negative bacterium"/>
    <property type="evidence" value="ECO:0007001"/>
    <property type="project" value="FlyBase"/>
</dbReference>
<dbReference type="GO" id="GO:0031640">
    <property type="term" value="P:killing of cells of another organism"/>
    <property type="evidence" value="ECO:0007669"/>
    <property type="project" value="UniProtKB-KW"/>
</dbReference>
<dbReference type="GO" id="GO:0045824">
    <property type="term" value="P:negative regulation of innate immune response"/>
    <property type="evidence" value="ECO:0007001"/>
    <property type="project" value="FlyBase"/>
</dbReference>
<dbReference type="CDD" id="cd16899">
    <property type="entry name" value="LYZ_C_invert"/>
    <property type="match status" value="1"/>
</dbReference>
<dbReference type="FunFam" id="1.10.530.10:FF:000001">
    <property type="entry name" value="Lysozyme C"/>
    <property type="match status" value="1"/>
</dbReference>
<dbReference type="Gene3D" id="1.10.530.10">
    <property type="match status" value="1"/>
</dbReference>
<dbReference type="InterPro" id="IPR001916">
    <property type="entry name" value="Glyco_hydro_22"/>
</dbReference>
<dbReference type="InterPro" id="IPR019799">
    <property type="entry name" value="Glyco_hydro_22_CS"/>
</dbReference>
<dbReference type="InterPro" id="IPR000974">
    <property type="entry name" value="Glyco_hydro_22_lys"/>
</dbReference>
<dbReference type="InterPro" id="IPR023346">
    <property type="entry name" value="Lysozyme-like_dom_sf"/>
</dbReference>
<dbReference type="PANTHER" id="PTHR11407:SF36">
    <property type="entry name" value="GEO02684P1-RELATED"/>
    <property type="match status" value="1"/>
</dbReference>
<dbReference type="PANTHER" id="PTHR11407">
    <property type="entry name" value="LYSOZYME C"/>
    <property type="match status" value="1"/>
</dbReference>
<dbReference type="Pfam" id="PF00062">
    <property type="entry name" value="Lys"/>
    <property type="match status" value="1"/>
</dbReference>
<dbReference type="PRINTS" id="PR00137">
    <property type="entry name" value="LYSOZYME"/>
</dbReference>
<dbReference type="PRINTS" id="PR00135">
    <property type="entry name" value="LYZLACT"/>
</dbReference>
<dbReference type="SMART" id="SM00263">
    <property type="entry name" value="LYZ1"/>
    <property type="match status" value="1"/>
</dbReference>
<dbReference type="SUPFAM" id="SSF53955">
    <property type="entry name" value="Lysozyme-like"/>
    <property type="match status" value="1"/>
</dbReference>
<dbReference type="PROSITE" id="PS00128">
    <property type="entry name" value="GLYCOSYL_HYDROL_F22_1"/>
    <property type="match status" value="1"/>
</dbReference>
<dbReference type="PROSITE" id="PS51348">
    <property type="entry name" value="GLYCOSYL_HYDROL_F22_2"/>
    <property type="match status" value="1"/>
</dbReference>